<gene>
    <name evidence="1" type="primary">aroB</name>
    <name type="ordered locus">CTA_0401</name>
</gene>
<reference key="1">
    <citation type="journal article" date="2005" name="Infect. Immun.">
        <title>Comparative genomic analysis of Chlamydia trachomatis oculotropic and genitotropic strains.</title>
        <authorList>
            <person name="Carlson J.H."/>
            <person name="Porcella S.F."/>
            <person name="McClarty G."/>
            <person name="Caldwell H.D."/>
        </authorList>
    </citation>
    <scope>NUCLEOTIDE SEQUENCE [LARGE SCALE GENOMIC DNA]</scope>
    <source>
        <strain>ATCC VR-571B / DSM 19440 / HAR-13</strain>
    </source>
</reference>
<evidence type="ECO:0000250" key="1">
    <source>
        <dbReference type="UniProtKB" id="P07639"/>
    </source>
</evidence>
<evidence type="ECO:0000250" key="2">
    <source>
        <dbReference type="UniProtKB" id="P9WPX9"/>
    </source>
</evidence>
<evidence type="ECO:0000250" key="3">
    <source>
        <dbReference type="UniProtKB" id="Q6GGU4"/>
    </source>
</evidence>
<evidence type="ECO:0000305" key="4"/>
<dbReference type="EC" id="4.2.3.4" evidence="1"/>
<dbReference type="EMBL" id="CP000051">
    <property type="protein sequence ID" value="AAX50635.1"/>
    <property type="molecule type" value="Genomic_DNA"/>
</dbReference>
<dbReference type="RefSeq" id="WP_009871722.1">
    <property type="nucleotide sequence ID" value="NC_007429.1"/>
</dbReference>
<dbReference type="SMR" id="Q3KLY7"/>
<dbReference type="KEGG" id="cta:CTA_0401"/>
<dbReference type="HOGENOM" id="CLU_001201_0_1_0"/>
<dbReference type="UniPathway" id="UPA00053">
    <property type="reaction ID" value="UER00085"/>
</dbReference>
<dbReference type="Proteomes" id="UP000002532">
    <property type="component" value="Chromosome"/>
</dbReference>
<dbReference type="GO" id="GO:0005737">
    <property type="term" value="C:cytoplasm"/>
    <property type="evidence" value="ECO:0007669"/>
    <property type="project" value="UniProtKB-SubCell"/>
</dbReference>
<dbReference type="GO" id="GO:0003856">
    <property type="term" value="F:3-dehydroquinate synthase activity"/>
    <property type="evidence" value="ECO:0007669"/>
    <property type="project" value="UniProtKB-EC"/>
</dbReference>
<dbReference type="GO" id="GO:0046872">
    <property type="term" value="F:metal ion binding"/>
    <property type="evidence" value="ECO:0007669"/>
    <property type="project" value="UniProtKB-KW"/>
</dbReference>
<dbReference type="GO" id="GO:0000166">
    <property type="term" value="F:nucleotide binding"/>
    <property type="evidence" value="ECO:0007669"/>
    <property type="project" value="UniProtKB-KW"/>
</dbReference>
<dbReference type="GO" id="GO:0008652">
    <property type="term" value="P:amino acid biosynthetic process"/>
    <property type="evidence" value="ECO:0007669"/>
    <property type="project" value="UniProtKB-KW"/>
</dbReference>
<dbReference type="GO" id="GO:0009073">
    <property type="term" value="P:aromatic amino acid family biosynthetic process"/>
    <property type="evidence" value="ECO:0007669"/>
    <property type="project" value="UniProtKB-KW"/>
</dbReference>
<dbReference type="GO" id="GO:0009423">
    <property type="term" value="P:chorismate biosynthetic process"/>
    <property type="evidence" value="ECO:0007669"/>
    <property type="project" value="UniProtKB-UniPathway"/>
</dbReference>
<dbReference type="CDD" id="cd08195">
    <property type="entry name" value="DHQS"/>
    <property type="match status" value="1"/>
</dbReference>
<dbReference type="FunFam" id="3.40.50.1970:FF:000007">
    <property type="entry name" value="Pentafunctional AROM polypeptide"/>
    <property type="match status" value="1"/>
</dbReference>
<dbReference type="Gene3D" id="3.40.50.1970">
    <property type="match status" value="1"/>
</dbReference>
<dbReference type="Gene3D" id="1.20.1090.10">
    <property type="entry name" value="Dehydroquinate synthase-like - alpha domain"/>
    <property type="match status" value="1"/>
</dbReference>
<dbReference type="InterPro" id="IPR050071">
    <property type="entry name" value="Dehydroquinate_synthase"/>
</dbReference>
<dbReference type="InterPro" id="IPR016037">
    <property type="entry name" value="DHQ_synth_AroB"/>
</dbReference>
<dbReference type="InterPro" id="IPR030963">
    <property type="entry name" value="DHQ_synth_fam"/>
</dbReference>
<dbReference type="InterPro" id="IPR030960">
    <property type="entry name" value="DHQS/DOIS_N"/>
</dbReference>
<dbReference type="InterPro" id="IPR056179">
    <property type="entry name" value="DHQS_C"/>
</dbReference>
<dbReference type="NCBIfam" id="TIGR01357">
    <property type="entry name" value="aroB"/>
    <property type="match status" value="1"/>
</dbReference>
<dbReference type="PANTHER" id="PTHR43622">
    <property type="entry name" value="3-DEHYDROQUINATE SYNTHASE"/>
    <property type="match status" value="1"/>
</dbReference>
<dbReference type="PANTHER" id="PTHR43622:SF7">
    <property type="entry name" value="3-DEHYDROQUINATE SYNTHASE, CHLOROPLASTIC"/>
    <property type="match status" value="1"/>
</dbReference>
<dbReference type="Pfam" id="PF01761">
    <property type="entry name" value="DHQ_synthase"/>
    <property type="match status" value="1"/>
</dbReference>
<dbReference type="Pfam" id="PF24621">
    <property type="entry name" value="DHQS_C"/>
    <property type="match status" value="1"/>
</dbReference>
<dbReference type="PIRSF" id="PIRSF001455">
    <property type="entry name" value="DHQ_synth"/>
    <property type="match status" value="1"/>
</dbReference>
<dbReference type="SUPFAM" id="SSF56796">
    <property type="entry name" value="Dehydroquinate synthase-like"/>
    <property type="match status" value="1"/>
</dbReference>
<organism>
    <name type="scientific">Chlamydia trachomatis serovar A (strain ATCC VR-571B / DSM 19440 / HAR-13)</name>
    <dbReference type="NCBI Taxonomy" id="315277"/>
    <lineage>
        <taxon>Bacteria</taxon>
        <taxon>Pseudomonadati</taxon>
        <taxon>Chlamydiota</taxon>
        <taxon>Chlamydiia</taxon>
        <taxon>Chlamydiales</taxon>
        <taxon>Chlamydiaceae</taxon>
        <taxon>Chlamydia/Chlamydophila group</taxon>
        <taxon>Chlamydia</taxon>
    </lineage>
</organism>
<comment type="function">
    <text evidence="1">Catalyzes the conversion of 3-deoxy-D-arabino-heptulosonate 7-phosphate (DAHP) to dehydroquinate (DHQ).</text>
</comment>
<comment type="catalytic activity">
    <reaction evidence="1">
        <text>7-phospho-2-dehydro-3-deoxy-D-arabino-heptonate = 3-dehydroquinate + phosphate</text>
        <dbReference type="Rhea" id="RHEA:21968"/>
        <dbReference type="ChEBI" id="CHEBI:32364"/>
        <dbReference type="ChEBI" id="CHEBI:43474"/>
        <dbReference type="ChEBI" id="CHEBI:58394"/>
        <dbReference type="EC" id="4.2.3.4"/>
    </reaction>
</comment>
<comment type="cofactor">
    <cofactor evidence="1">
        <name>NAD(+)</name>
        <dbReference type="ChEBI" id="CHEBI:57540"/>
    </cofactor>
</comment>
<comment type="cofactor">
    <cofactor evidence="1">
        <name>Co(2+)</name>
        <dbReference type="ChEBI" id="CHEBI:48828"/>
    </cofactor>
    <cofactor evidence="1">
        <name>Zn(2+)</name>
        <dbReference type="ChEBI" id="CHEBI:29105"/>
    </cofactor>
    <text evidence="1">Binds 1 divalent metal cation per subunit. Can use either Co(2+) or Zn(2+).</text>
</comment>
<comment type="pathway">
    <text evidence="1">Metabolic intermediate biosynthesis; chorismate biosynthesis; chorismate from D-erythrose 4-phosphate and phosphoenolpyruvate: step 2/7.</text>
</comment>
<comment type="subcellular location">
    <subcellularLocation>
        <location evidence="1">Cytoplasm</location>
    </subcellularLocation>
</comment>
<comment type="similarity">
    <text evidence="4">Belongs to the sugar phosphate cyclases superfamily. Dehydroquinate synthase family.</text>
</comment>
<feature type="chain" id="PRO_0000231077" description="3-dehydroquinate synthase">
    <location>
        <begin position="1"/>
        <end position="373"/>
    </location>
</feature>
<feature type="binding site" evidence="2">
    <location>
        <begin position="67"/>
        <end position="72"/>
    </location>
    <ligand>
        <name>NAD(+)</name>
        <dbReference type="ChEBI" id="CHEBI:57540"/>
    </ligand>
</feature>
<feature type="binding site" evidence="2">
    <location>
        <begin position="101"/>
        <end position="105"/>
    </location>
    <ligand>
        <name>NAD(+)</name>
        <dbReference type="ChEBI" id="CHEBI:57540"/>
    </ligand>
</feature>
<feature type="binding site" evidence="2">
    <location>
        <begin position="125"/>
        <end position="126"/>
    </location>
    <ligand>
        <name>NAD(+)</name>
        <dbReference type="ChEBI" id="CHEBI:57540"/>
    </ligand>
</feature>
<feature type="binding site" evidence="2">
    <location>
        <position position="138"/>
    </location>
    <ligand>
        <name>NAD(+)</name>
        <dbReference type="ChEBI" id="CHEBI:57540"/>
    </ligand>
</feature>
<feature type="binding site" evidence="3">
    <location>
        <position position="147"/>
    </location>
    <ligand>
        <name>NAD(+)</name>
        <dbReference type="ChEBI" id="CHEBI:57540"/>
    </ligand>
</feature>
<feature type="binding site" evidence="2">
    <location>
        <position position="180"/>
    </location>
    <ligand>
        <name>Zn(2+)</name>
        <dbReference type="ChEBI" id="CHEBI:29105"/>
    </ligand>
</feature>
<feature type="binding site" evidence="2">
    <location>
        <position position="240"/>
    </location>
    <ligand>
        <name>Zn(2+)</name>
        <dbReference type="ChEBI" id="CHEBI:29105"/>
    </ligand>
</feature>
<feature type="binding site" evidence="2">
    <location>
        <position position="256"/>
    </location>
    <ligand>
        <name>Zn(2+)</name>
        <dbReference type="ChEBI" id="CHEBI:29105"/>
    </ligand>
</feature>
<keyword id="KW-0028">Amino-acid biosynthesis</keyword>
<keyword id="KW-0057">Aromatic amino acid biosynthesis</keyword>
<keyword id="KW-0170">Cobalt</keyword>
<keyword id="KW-0963">Cytoplasm</keyword>
<keyword id="KW-0456">Lyase</keyword>
<keyword id="KW-0479">Metal-binding</keyword>
<keyword id="KW-0520">NAD</keyword>
<keyword id="KW-0547">Nucleotide-binding</keyword>
<keyword id="KW-0862">Zinc</keyword>
<name>AROB_CHLTA</name>
<proteinExistence type="inferred from homology"/>
<accession>Q3KLY7</accession>
<protein>
    <recommendedName>
        <fullName evidence="1">3-dehydroquinate synthase</fullName>
        <shortName evidence="1">DHQS</shortName>
        <ecNumber evidence="1">4.2.3.4</ecNumber>
    </recommendedName>
</protein>
<sequence length="373" mass="41153">MIELVTDSPHPIHLVDSLQNPKLFASLSTDFPLIFITNTKLNALILPPLLDLARSLGFSVETLTIPEGEETKTGDTFLSLHQQLTDLNVPRQATLIGVGGGVILDIAGFVAATHCRGMPFIAIPTTLVAMIDASIGGKNGINLNHIKNRIGSFYLPKAVWICPRKLSFLPQQELHHGIAECIKHAYIADSAILPLLQDPNALKKEDKLSLLIKKNCLCKASVVQQDVRDYAKRQILNFGHTLGHALEMLFIGKIPHSCAISVGMVLETKLSLSLGVARSPAILHSLIQDLLRYQLPVSLKDLYMRAQIPPHNCDQILSALTYDKKKQNTPLPPFVMIEEIGLAASFDGRFCQTISKHILTKVLEEEFYAMHNN</sequence>